<gene>
    <name evidence="1" type="primary">metK</name>
    <name type="ordered locus">AM1_5701</name>
</gene>
<protein>
    <recommendedName>
        <fullName evidence="1">S-adenosylmethionine synthase</fullName>
        <shortName evidence="1">AdoMet synthase</shortName>
        <ecNumber evidence="1">2.5.1.6</ecNumber>
    </recommendedName>
    <alternativeName>
        <fullName evidence="1">MAT</fullName>
    </alternativeName>
    <alternativeName>
        <fullName evidence="1">Methionine adenosyltransferase</fullName>
    </alternativeName>
</protein>
<dbReference type="EC" id="2.5.1.6" evidence="1"/>
<dbReference type="EMBL" id="CP000828">
    <property type="protein sequence ID" value="ABW30649.1"/>
    <property type="molecule type" value="Genomic_DNA"/>
</dbReference>
<dbReference type="RefSeq" id="WP_012165864.1">
    <property type="nucleotide sequence ID" value="NC_009925.1"/>
</dbReference>
<dbReference type="SMR" id="B0CG96"/>
<dbReference type="STRING" id="329726.AM1_5701"/>
<dbReference type="KEGG" id="amr:AM1_5701"/>
<dbReference type="eggNOG" id="COG0192">
    <property type="taxonomic scope" value="Bacteria"/>
</dbReference>
<dbReference type="HOGENOM" id="CLU_041802_1_1_3"/>
<dbReference type="OrthoDB" id="9801686at2"/>
<dbReference type="UniPathway" id="UPA00315">
    <property type="reaction ID" value="UER00080"/>
</dbReference>
<dbReference type="Proteomes" id="UP000000268">
    <property type="component" value="Chromosome"/>
</dbReference>
<dbReference type="GO" id="GO:0005737">
    <property type="term" value="C:cytoplasm"/>
    <property type="evidence" value="ECO:0007669"/>
    <property type="project" value="UniProtKB-SubCell"/>
</dbReference>
<dbReference type="GO" id="GO:0005524">
    <property type="term" value="F:ATP binding"/>
    <property type="evidence" value="ECO:0007669"/>
    <property type="project" value="UniProtKB-UniRule"/>
</dbReference>
<dbReference type="GO" id="GO:0000287">
    <property type="term" value="F:magnesium ion binding"/>
    <property type="evidence" value="ECO:0007669"/>
    <property type="project" value="UniProtKB-UniRule"/>
</dbReference>
<dbReference type="GO" id="GO:0004478">
    <property type="term" value="F:methionine adenosyltransferase activity"/>
    <property type="evidence" value="ECO:0007669"/>
    <property type="project" value="UniProtKB-UniRule"/>
</dbReference>
<dbReference type="GO" id="GO:0006730">
    <property type="term" value="P:one-carbon metabolic process"/>
    <property type="evidence" value="ECO:0007669"/>
    <property type="project" value="UniProtKB-KW"/>
</dbReference>
<dbReference type="GO" id="GO:0006556">
    <property type="term" value="P:S-adenosylmethionine biosynthetic process"/>
    <property type="evidence" value="ECO:0007669"/>
    <property type="project" value="UniProtKB-UniRule"/>
</dbReference>
<dbReference type="CDD" id="cd18079">
    <property type="entry name" value="S-AdoMet_synt"/>
    <property type="match status" value="1"/>
</dbReference>
<dbReference type="FunFam" id="3.30.300.10:FF:000003">
    <property type="entry name" value="S-adenosylmethionine synthase"/>
    <property type="match status" value="1"/>
</dbReference>
<dbReference type="Gene3D" id="3.30.300.10">
    <property type="match status" value="3"/>
</dbReference>
<dbReference type="HAMAP" id="MF_00086">
    <property type="entry name" value="S_AdoMet_synth1"/>
    <property type="match status" value="1"/>
</dbReference>
<dbReference type="InterPro" id="IPR022631">
    <property type="entry name" value="ADOMET_SYNTHASE_CS"/>
</dbReference>
<dbReference type="InterPro" id="IPR022630">
    <property type="entry name" value="S-AdoMet_synt_C"/>
</dbReference>
<dbReference type="InterPro" id="IPR022629">
    <property type="entry name" value="S-AdoMet_synt_central"/>
</dbReference>
<dbReference type="InterPro" id="IPR022628">
    <property type="entry name" value="S-AdoMet_synt_N"/>
</dbReference>
<dbReference type="InterPro" id="IPR002133">
    <property type="entry name" value="S-AdoMet_synthetase"/>
</dbReference>
<dbReference type="InterPro" id="IPR022636">
    <property type="entry name" value="S-AdoMet_synthetase_sfam"/>
</dbReference>
<dbReference type="NCBIfam" id="TIGR01034">
    <property type="entry name" value="metK"/>
    <property type="match status" value="1"/>
</dbReference>
<dbReference type="PANTHER" id="PTHR11964">
    <property type="entry name" value="S-ADENOSYLMETHIONINE SYNTHETASE"/>
    <property type="match status" value="1"/>
</dbReference>
<dbReference type="Pfam" id="PF02773">
    <property type="entry name" value="S-AdoMet_synt_C"/>
    <property type="match status" value="1"/>
</dbReference>
<dbReference type="Pfam" id="PF02772">
    <property type="entry name" value="S-AdoMet_synt_M"/>
    <property type="match status" value="1"/>
</dbReference>
<dbReference type="Pfam" id="PF00438">
    <property type="entry name" value="S-AdoMet_synt_N"/>
    <property type="match status" value="1"/>
</dbReference>
<dbReference type="PIRSF" id="PIRSF000497">
    <property type="entry name" value="MAT"/>
    <property type="match status" value="1"/>
</dbReference>
<dbReference type="SUPFAM" id="SSF55973">
    <property type="entry name" value="S-adenosylmethionine synthetase"/>
    <property type="match status" value="3"/>
</dbReference>
<dbReference type="PROSITE" id="PS00376">
    <property type="entry name" value="ADOMET_SYNTHASE_1"/>
    <property type="match status" value="1"/>
</dbReference>
<dbReference type="PROSITE" id="PS00377">
    <property type="entry name" value="ADOMET_SYNTHASE_2"/>
    <property type="match status" value="1"/>
</dbReference>
<organism>
    <name type="scientific">Acaryochloris marina (strain MBIC 11017)</name>
    <dbReference type="NCBI Taxonomy" id="329726"/>
    <lineage>
        <taxon>Bacteria</taxon>
        <taxon>Bacillati</taxon>
        <taxon>Cyanobacteriota</taxon>
        <taxon>Cyanophyceae</taxon>
        <taxon>Acaryochloridales</taxon>
        <taxon>Acaryochloridaceae</taxon>
        <taxon>Acaryochloris</taxon>
    </lineage>
</organism>
<proteinExistence type="inferred from homology"/>
<name>METK_ACAM1</name>
<feature type="chain" id="PRO_1000075364" description="S-adenosylmethionine synthase">
    <location>
        <begin position="1"/>
        <end position="418"/>
    </location>
</feature>
<feature type="region of interest" description="Flexible loop" evidence="1">
    <location>
        <begin position="100"/>
        <end position="110"/>
    </location>
</feature>
<feature type="binding site" description="in other chain" evidence="1">
    <location>
        <position position="16"/>
    </location>
    <ligand>
        <name>ATP</name>
        <dbReference type="ChEBI" id="CHEBI:30616"/>
        <note>ligand shared between two neighboring subunits</note>
    </ligand>
</feature>
<feature type="binding site" evidence="1">
    <location>
        <position position="18"/>
    </location>
    <ligand>
        <name>Mg(2+)</name>
        <dbReference type="ChEBI" id="CHEBI:18420"/>
    </ligand>
</feature>
<feature type="binding site" evidence="1">
    <location>
        <position position="44"/>
    </location>
    <ligand>
        <name>K(+)</name>
        <dbReference type="ChEBI" id="CHEBI:29103"/>
    </ligand>
</feature>
<feature type="binding site" description="in other chain" evidence="1">
    <location>
        <position position="57"/>
    </location>
    <ligand>
        <name>L-methionine</name>
        <dbReference type="ChEBI" id="CHEBI:57844"/>
        <note>ligand shared between two neighboring subunits</note>
    </ligand>
</feature>
<feature type="binding site" description="in other chain" evidence="1">
    <location>
        <position position="100"/>
    </location>
    <ligand>
        <name>L-methionine</name>
        <dbReference type="ChEBI" id="CHEBI:57844"/>
        <note>ligand shared between two neighboring subunits</note>
    </ligand>
</feature>
<feature type="binding site" description="in other chain" evidence="1">
    <location>
        <begin position="174"/>
        <end position="176"/>
    </location>
    <ligand>
        <name>ATP</name>
        <dbReference type="ChEBI" id="CHEBI:30616"/>
        <note>ligand shared between two neighboring subunits</note>
    </ligand>
</feature>
<feature type="binding site" evidence="1">
    <location>
        <position position="259"/>
    </location>
    <ligand>
        <name>ATP</name>
        <dbReference type="ChEBI" id="CHEBI:30616"/>
        <note>ligand shared between two neighboring subunits</note>
    </ligand>
</feature>
<feature type="binding site" evidence="1">
    <location>
        <position position="259"/>
    </location>
    <ligand>
        <name>L-methionine</name>
        <dbReference type="ChEBI" id="CHEBI:57844"/>
        <note>ligand shared between two neighboring subunits</note>
    </ligand>
</feature>
<feature type="binding site" description="in other chain" evidence="1">
    <location>
        <begin position="265"/>
        <end position="266"/>
    </location>
    <ligand>
        <name>ATP</name>
        <dbReference type="ChEBI" id="CHEBI:30616"/>
        <note>ligand shared between two neighboring subunits</note>
    </ligand>
</feature>
<feature type="binding site" evidence="1">
    <location>
        <position position="282"/>
    </location>
    <ligand>
        <name>ATP</name>
        <dbReference type="ChEBI" id="CHEBI:30616"/>
        <note>ligand shared between two neighboring subunits</note>
    </ligand>
</feature>
<feature type="binding site" evidence="1">
    <location>
        <position position="286"/>
    </location>
    <ligand>
        <name>ATP</name>
        <dbReference type="ChEBI" id="CHEBI:30616"/>
        <note>ligand shared between two neighboring subunits</note>
    </ligand>
</feature>
<feature type="binding site" description="in other chain" evidence="1">
    <location>
        <position position="290"/>
    </location>
    <ligand>
        <name>L-methionine</name>
        <dbReference type="ChEBI" id="CHEBI:57844"/>
        <note>ligand shared between two neighboring subunits</note>
    </ligand>
</feature>
<comment type="function">
    <text evidence="1">Catalyzes the formation of S-adenosylmethionine (AdoMet) from methionine and ATP. The overall synthetic reaction is composed of two sequential steps, AdoMet formation and the subsequent tripolyphosphate hydrolysis which occurs prior to release of AdoMet from the enzyme.</text>
</comment>
<comment type="catalytic activity">
    <reaction evidence="1">
        <text>L-methionine + ATP + H2O = S-adenosyl-L-methionine + phosphate + diphosphate</text>
        <dbReference type="Rhea" id="RHEA:21080"/>
        <dbReference type="ChEBI" id="CHEBI:15377"/>
        <dbReference type="ChEBI" id="CHEBI:30616"/>
        <dbReference type="ChEBI" id="CHEBI:33019"/>
        <dbReference type="ChEBI" id="CHEBI:43474"/>
        <dbReference type="ChEBI" id="CHEBI:57844"/>
        <dbReference type="ChEBI" id="CHEBI:59789"/>
        <dbReference type="EC" id="2.5.1.6"/>
    </reaction>
</comment>
<comment type="cofactor">
    <cofactor evidence="1">
        <name>Mg(2+)</name>
        <dbReference type="ChEBI" id="CHEBI:18420"/>
    </cofactor>
    <text evidence="1">Binds 2 divalent ions per subunit.</text>
</comment>
<comment type="cofactor">
    <cofactor evidence="1">
        <name>K(+)</name>
        <dbReference type="ChEBI" id="CHEBI:29103"/>
    </cofactor>
    <text evidence="1">Binds 1 potassium ion per subunit.</text>
</comment>
<comment type="pathway">
    <text evidence="1">Amino-acid biosynthesis; S-adenosyl-L-methionine biosynthesis; S-adenosyl-L-methionine from L-methionine: step 1/1.</text>
</comment>
<comment type="subunit">
    <text evidence="1">Homotetramer; dimer of dimers.</text>
</comment>
<comment type="subcellular location">
    <subcellularLocation>
        <location evidence="1">Cytoplasm</location>
    </subcellularLocation>
</comment>
<comment type="similarity">
    <text evidence="1">Belongs to the AdoMet synthase family.</text>
</comment>
<reference key="1">
    <citation type="journal article" date="2008" name="Proc. Natl. Acad. Sci. U.S.A.">
        <title>Niche adaptation and genome expansion in the chlorophyll d-producing cyanobacterium Acaryochloris marina.</title>
        <authorList>
            <person name="Swingley W.D."/>
            <person name="Chen M."/>
            <person name="Cheung P.C."/>
            <person name="Conrad A.L."/>
            <person name="Dejesa L.C."/>
            <person name="Hao J."/>
            <person name="Honchak B.M."/>
            <person name="Karbach L.E."/>
            <person name="Kurdoglu A."/>
            <person name="Lahiri S."/>
            <person name="Mastrian S.D."/>
            <person name="Miyashita H."/>
            <person name="Page L."/>
            <person name="Ramakrishna P."/>
            <person name="Satoh S."/>
            <person name="Sattley W.M."/>
            <person name="Shimada Y."/>
            <person name="Taylor H.L."/>
            <person name="Tomo T."/>
            <person name="Tsuchiya T."/>
            <person name="Wang Z.T."/>
            <person name="Raymond J."/>
            <person name="Mimuro M."/>
            <person name="Blankenship R.E."/>
            <person name="Touchman J.W."/>
        </authorList>
    </citation>
    <scope>NUCLEOTIDE SEQUENCE [LARGE SCALE GENOMIC DNA]</scope>
    <source>
        <strain>MBIC 11017</strain>
    </source>
</reference>
<keyword id="KW-0067">ATP-binding</keyword>
<keyword id="KW-0963">Cytoplasm</keyword>
<keyword id="KW-0460">Magnesium</keyword>
<keyword id="KW-0479">Metal-binding</keyword>
<keyword id="KW-0547">Nucleotide-binding</keyword>
<keyword id="KW-0554">One-carbon metabolism</keyword>
<keyword id="KW-0630">Potassium</keyword>
<keyword id="KW-1185">Reference proteome</keyword>
<keyword id="KW-0808">Transferase</keyword>
<sequence>MPKRYLFTSESVTEGHPDKVCDQISDTILDALLSQDPASRVAAEVVVNTGLVLLTGEITTKAQVNFVDLVRQKITEIGYTDSDNGFAANSCSVLVALDEQSPDIAQGVDSAQETREEKSDQELDAIGAGDQGLMFGFACNETPELMPLPISLAHRVTRRLAAVRKTQLGYLRPDGKSQVTVTYEDGRPVGIDTILVSTQHDATIGDITDPAAVQAKIKEDLWNAVVLPVFADIDIKPDDNTRFLVNPTGQFVVGGPQGDAGLTGRKIIVDTYGGYSRHGGGAFSGKDPTKVDRSAAYACRYVAKNIVAAGLAEKCEVQLSYAIGVARPVSILIETFGTGKVDEDRLLQVVQENFELRPAGLIQTFGLTKLPGERGGRFYQDVAAYGHFGRTDLDLPWEATDKADLLKQALSPALSGNA</sequence>
<evidence type="ECO:0000255" key="1">
    <source>
        <dbReference type="HAMAP-Rule" id="MF_00086"/>
    </source>
</evidence>
<accession>B0CG96</accession>